<accession>C1DHQ1</accession>
<feature type="chain" id="PRO_1000204229" description="Uroporphyrinogen decarboxylase">
    <location>
        <begin position="1"/>
        <end position="355"/>
    </location>
</feature>
<feature type="binding site" evidence="1">
    <location>
        <begin position="27"/>
        <end position="31"/>
    </location>
    <ligand>
        <name>substrate</name>
    </ligand>
</feature>
<feature type="binding site" evidence="1">
    <location>
        <position position="78"/>
    </location>
    <ligand>
        <name>substrate</name>
    </ligand>
</feature>
<feature type="binding site" evidence="1">
    <location>
        <position position="155"/>
    </location>
    <ligand>
        <name>substrate</name>
    </ligand>
</feature>
<feature type="binding site" evidence="1">
    <location>
        <position position="210"/>
    </location>
    <ligand>
        <name>substrate</name>
    </ligand>
</feature>
<feature type="binding site" evidence="1">
    <location>
        <position position="328"/>
    </location>
    <ligand>
        <name>substrate</name>
    </ligand>
</feature>
<feature type="site" description="Transition state stabilizer" evidence="1">
    <location>
        <position position="78"/>
    </location>
</feature>
<evidence type="ECO:0000255" key="1">
    <source>
        <dbReference type="HAMAP-Rule" id="MF_00218"/>
    </source>
</evidence>
<sequence>MTVLKNDRFLRALLKQPVDVTPVWMMRQAGRYLPEYRATRAKAGDFMSLCMNPELACEVTLQPLDRYPQLDAAILFSDILTVPDAMGLGLYFETGEGPRFRKVVSSPADIEALPVPDPERDLGYVMAAVRTIRRELNGRVPLIGFSGSPWTLATYMVEGGSSKDFRKSKAMLYDNPQAMHALLDKLARAVTAYLNGQILAGAQAVQIFDSWGGSLSSAAYQEFSLAYMKRIVDGLIREHEGRRVPVILFTKGGGLWLEAMAGSGAEALGLDWTCDIGDARARVGGKVALQGNMDPSVLYANPAAIRAEVARILARYGAGSGHVFNLGHGITPEVDPAHAGAFFEAVHELSAQYHR</sequence>
<comment type="function">
    <text evidence="1">Catalyzes the decarboxylation of four acetate groups of uroporphyrinogen-III to yield coproporphyrinogen-III.</text>
</comment>
<comment type="catalytic activity">
    <reaction evidence="1">
        <text>uroporphyrinogen III + 4 H(+) = coproporphyrinogen III + 4 CO2</text>
        <dbReference type="Rhea" id="RHEA:19865"/>
        <dbReference type="ChEBI" id="CHEBI:15378"/>
        <dbReference type="ChEBI" id="CHEBI:16526"/>
        <dbReference type="ChEBI" id="CHEBI:57308"/>
        <dbReference type="ChEBI" id="CHEBI:57309"/>
        <dbReference type="EC" id="4.1.1.37"/>
    </reaction>
</comment>
<comment type="pathway">
    <text evidence="1">Porphyrin-containing compound metabolism; protoporphyrin-IX biosynthesis; coproporphyrinogen-III from 5-aminolevulinate: step 4/4.</text>
</comment>
<comment type="subunit">
    <text evidence="1">Homodimer.</text>
</comment>
<comment type="subcellular location">
    <subcellularLocation>
        <location evidence="1">Cytoplasm</location>
    </subcellularLocation>
</comment>
<comment type="similarity">
    <text evidence="1">Belongs to the uroporphyrinogen decarboxylase family.</text>
</comment>
<keyword id="KW-0963">Cytoplasm</keyword>
<keyword id="KW-0210">Decarboxylase</keyword>
<keyword id="KW-0456">Lyase</keyword>
<keyword id="KW-0627">Porphyrin biosynthesis</keyword>
<organism>
    <name type="scientific">Azotobacter vinelandii (strain DJ / ATCC BAA-1303)</name>
    <dbReference type="NCBI Taxonomy" id="322710"/>
    <lineage>
        <taxon>Bacteria</taxon>
        <taxon>Pseudomonadati</taxon>
        <taxon>Pseudomonadota</taxon>
        <taxon>Gammaproteobacteria</taxon>
        <taxon>Pseudomonadales</taxon>
        <taxon>Pseudomonadaceae</taxon>
        <taxon>Azotobacter</taxon>
    </lineage>
</organism>
<protein>
    <recommendedName>
        <fullName evidence="1">Uroporphyrinogen decarboxylase</fullName>
        <shortName evidence="1">UPD</shortName>
        <shortName evidence="1">URO-D</shortName>
        <ecNumber evidence="1">4.1.1.37</ecNumber>
    </recommendedName>
</protein>
<name>DCUP_AZOVD</name>
<gene>
    <name evidence="1" type="primary">hemE</name>
    <name type="ordered locus">Avin_45190</name>
</gene>
<proteinExistence type="inferred from homology"/>
<dbReference type="EC" id="4.1.1.37" evidence="1"/>
<dbReference type="EMBL" id="CP001157">
    <property type="protein sequence ID" value="ACO80634.1"/>
    <property type="molecule type" value="Genomic_DNA"/>
</dbReference>
<dbReference type="RefSeq" id="WP_012703001.1">
    <property type="nucleotide sequence ID" value="NC_012560.1"/>
</dbReference>
<dbReference type="SMR" id="C1DHQ1"/>
<dbReference type="STRING" id="322710.Avin_45190"/>
<dbReference type="EnsemblBacteria" id="ACO80634">
    <property type="protein sequence ID" value="ACO80634"/>
    <property type="gene ID" value="Avin_45190"/>
</dbReference>
<dbReference type="GeneID" id="88187404"/>
<dbReference type="KEGG" id="avn:Avin_45190"/>
<dbReference type="eggNOG" id="COG0407">
    <property type="taxonomic scope" value="Bacteria"/>
</dbReference>
<dbReference type="HOGENOM" id="CLU_040933_0_0_6"/>
<dbReference type="OrthoDB" id="9806656at2"/>
<dbReference type="UniPathway" id="UPA00251">
    <property type="reaction ID" value="UER00321"/>
</dbReference>
<dbReference type="Proteomes" id="UP000002424">
    <property type="component" value="Chromosome"/>
</dbReference>
<dbReference type="GO" id="GO:0005829">
    <property type="term" value="C:cytosol"/>
    <property type="evidence" value="ECO:0007669"/>
    <property type="project" value="TreeGrafter"/>
</dbReference>
<dbReference type="GO" id="GO:0004853">
    <property type="term" value="F:uroporphyrinogen decarboxylase activity"/>
    <property type="evidence" value="ECO:0007669"/>
    <property type="project" value="UniProtKB-UniRule"/>
</dbReference>
<dbReference type="GO" id="GO:0019353">
    <property type="term" value="P:protoporphyrinogen IX biosynthetic process from glutamate"/>
    <property type="evidence" value="ECO:0007669"/>
    <property type="project" value="TreeGrafter"/>
</dbReference>
<dbReference type="CDD" id="cd00717">
    <property type="entry name" value="URO-D"/>
    <property type="match status" value="1"/>
</dbReference>
<dbReference type="FunFam" id="3.20.20.210:FF:000001">
    <property type="entry name" value="Uroporphyrinogen decarboxylase"/>
    <property type="match status" value="1"/>
</dbReference>
<dbReference type="Gene3D" id="3.20.20.210">
    <property type="match status" value="1"/>
</dbReference>
<dbReference type="HAMAP" id="MF_00218">
    <property type="entry name" value="URO_D"/>
    <property type="match status" value="1"/>
</dbReference>
<dbReference type="InterPro" id="IPR038071">
    <property type="entry name" value="UROD/MetE-like_sf"/>
</dbReference>
<dbReference type="InterPro" id="IPR006361">
    <property type="entry name" value="Uroporphyrinogen_deCO2ase_HemE"/>
</dbReference>
<dbReference type="InterPro" id="IPR000257">
    <property type="entry name" value="Uroporphyrinogen_deCOase"/>
</dbReference>
<dbReference type="NCBIfam" id="TIGR01464">
    <property type="entry name" value="hemE"/>
    <property type="match status" value="1"/>
</dbReference>
<dbReference type="PANTHER" id="PTHR21091">
    <property type="entry name" value="METHYLTETRAHYDROFOLATE:HOMOCYSTEINE METHYLTRANSFERASE RELATED"/>
    <property type="match status" value="1"/>
</dbReference>
<dbReference type="PANTHER" id="PTHR21091:SF169">
    <property type="entry name" value="UROPORPHYRINOGEN DECARBOXYLASE"/>
    <property type="match status" value="1"/>
</dbReference>
<dbReference type="Pfam" id="PF01208">
    <property type="entry name" value="URO-D"/>
    <property type="match status" value="1"/>
</dbReference>
<dbReference type="SUPFAM" id="SSF51726">
    <property type="entry name" value="UROD/MetE-like"/>
    <property type="match status" value="1"/>
</dbReference>
<dbReference type="PROSITE" id="PS00906">
    <property type="entry name" value="UROD_1"/>
    <property type="match status" value="1"/>
</dbReference>
<dbReference type="PROSITE" id="PS00907">
    <property type="entry name" value="UROD_2"/>
    <property type="match status" value="1"/>
</dbReference>
<reference key="1">
    <citation type="journal article" date="2009" name="J. Bacteriol.">
        <title>Genome sequence of Azotobacter vinelandii, an obligate aerobe specialized to support diverse anaerobic metabolic processes.</title>
        <authorList>
            <person name="Setubal J.C."/>
            <person name="Dos Santos P."/>
            <person name="Goldman B.S."/>
            <person name="Ertesvaag H."/>
            <person name="Espin G."/>
            <person name="Rubio L.M."/>
            <person name="Valla S."/>
            <person name="Almeida N.F."/>
            <person name="Balasubramanian D."/>
            <person name="Cromes L."/>
            <person name="Curatti L."/>
            <person name="Du Z."/>
            <person name="Godsy E."/>
            <person name="Goodner B."/>
            <person name="Hellner-Burris K."/>
            <person name="Hernandez J.A."/>
            <person name="Houmiel K."/>
            <person name="Imperial J."/>
            <person name="Kennedy C."/>
            <person name="Larson T.J."/>
            <person name="Latreille P."/>
            <person name="Ligon L.S."/>
            <person name="Lu J."/>
            <person name="Maerk M."/>
            <person name="Miller N.M."/>
            <person name="Norton S."/>
            <person name="O'Carroll I.P."/>
            <person name="Paulsen I."/>
            <person name="Raulfs E.C."/>
            <person name="Roemer R."/>
            <person name="Rosser J."/>
            <person name="Segura D."/>
            <person name="Slater S."/>
            <person name="Stricklin S.L."/>
            <person name="Studholme D.J."/>
            <person name="Sun J."/>
            <person name="Viana C.J."/>
            <person name="Wallin E."/>
            <person name="Wang B."/>
            <person name="Wheeler C."/>
            <person name="Zhu H."/>
            <person name="Dean D.R."/>
            <person name="Dixon R."/>
            <person name="Wood D."/>
        </authorList>
    </citation>
    <scope>NUCLEOTIDE SEQUENCE [LARGE SCALE GENOMIC DNA]</scope>
    <source>
        <strain>DJ / ATCC BAA-1303</strain>
    </source>
</reference>